<gene>
    <name evidence="1" type="primary">kdkA</name>
    <name type="ordered locus">xcc-b100_3366</name>
</gene>
<accession>B0RTE2</accession>
<dbReference type="EC" id="2.7.1.166" evidence="1"/>
<dbReference type="EMBL" id="AM920689">
    <property type="protein sequence ID" value="CAP52731.1"/>
    <property type="molecule type" value="Genomic_DNA"/>
</dbReference>
<dbReference type="SMR" id="B0RTE2"/>
<dbReference type="KEGG" id="xca:xcc-b100_3366"/>
<dbReference type="HOGENOM" id="CLU_094226_0_0_6"/>
<dbReference type="UniPathway" id="UPA00958"/>
<dbReference type="Proteomes" id="UP000001188">
    <property type="component" value="Chromosome"/>
</dbReference>
<dbReference type="GO" id="GO:0005886">
    <property type="term" value="C:plasma membrane"/>
    <property type="evidence" value="ECO:0007669"/>
    <property type="project" value="UniProtKB-SubCell"/>
</dbReference>
<dbReference type="GO" id="GO:0005524">
    <property type="term" value="F:ATP binding"/>
    <property type="evidence" value="ECO:0007669"/>
    <property type="project" value="UniProtKB-UniRule"/>
</dbReference>
<dbReference type="GO" id="GO:0016301">
    <property type="term" value="F:kinase activity"/>
    <property type="evidence" value="ECO:0007669"/>
    <property type="project" value="UniProtKB-KW"/>
</dbReference>
<dbReference type="GO" id="GO:0016773">
    <property type="term" value="F:phosphotransferase activity, alcohol group as acceptor"/>
    <property type="evidence" value="ECO:0007669"/>
    <property type="project" value="UniProtKB-UniRule"/>
</dbReference>
<dbReference type="GO" id="GO:0009244">
    <property type="term" value="P:lipopolysaccharide core region biosynthetic process"/>
    <property type="evidence" value="ECO:0007669"/>
    <property type="project" value="UniProtKB-UniRule"/>
</dbReference>
<dbReference type="Gene3D" id="1.10.510.10">
    <property type="entry name" value="Transferase(Phosphotransferase) domain 1"/>
    <property type="match status" value="1"/>
</dbReference>
<dbReference type="HAMAP" id="MF_00521">
    <property type="entry name" value="KDO_kinase"/>
    <property type="match status" value="1"/>
</dbReference>
<dbReference type="InterPro" id="IPR022826">
    <property type="entry name" value="KDO_kinase"/>
</dbReference>
<dbReference type="InterPro" id="IPR011009">
    <property type="entry name" value="Kinase-like_dom_sf"/>
</dbReference>
<dbReference type="NCBIfam" id="NF002475">
    <property type="entry name" value="PRK01723.1"/>
    <property type="match status" value="1"/>
</dbReference>
<dbReference type="Pfam" id="PF06293">
    <property type="entry name" value="Kdo"/>
    <property type="match status" value="1"/>
</dbReference>
<dbReference type="SUPFAM" id="SSF56112">
    <property type="entry name" value="Protein kinase-like (PK-like)"/>
    <property type="match status" value="1"/>
</dbReference>
<sequence>MVSFDATEALTPYREGRGYGAILFDRERLRQADAGLFSPQRWGDRARPVDEGGRGGAWFVDAPFGHSVLRQYRRGGMAARVSRDQYLWKGAGRTRSFAEFRLMRELLKRKLPVPRPLAACYLREGLGYRAALLMERLENVRSLADHAQVAGRGAPWEDTGRLIARFHRAGLDHADLNAHNILFDAGGHGWLIDFDRGVLRIPATRWRERNLARLHRSLLKLRGNRTREDVDKDYERLHRAYELAWGRGY</sequence>
<organism>
    <name type="scientific">Xanthomonas campestris pv. campestris (strain B100)</name>
    <dbReference type="NCBI Taxonomy" id="509169"/>
    <lineage>
        <taxon>Bacteria</taxon>
        <taxon>Pseudomonadati</taxon>
        <taxon>Pseudomonadota</taxon>
        <taxon>Gammaproteobacteria</taxon>
        <taxon>Lysobacterales</taxon>
        <taxon>Lysobacteraceae</taxon>
        <taxon>Xanthomonas</taxon>
    </lineage>
</organism>
<reference key="1">
    <citation type="journal article" date="2008" name="J. Biotechnol.">
        <title>The genome of Xanthomonas campestris pv. campestris B100 and its use for the reconstruction of metabolic pathways involved in xanthan biosynthesis.</title>
        <authorList>
            <person name="Vorhoelter F.-J."/>
            <person name="Schneiker S."/>
            <person name="Goesmann A."/>
            <person name="Krause L."/>
            <person name="Bekel T."/>
            <person name="Kaiser O."/>
            <person name="Linke B."/>
            <person name="Patschkowski T."/>
            <person name="Rueckert C."/>
            <person name="Schmid J."/>
            <person name="Sidhu V.K."/>
            <person name="Sieber V."/>
            <person name="Tauch A."/>
            <person name="Watt S.A."/>
            <person name="Weisshaar B."/>
            <person name="Becker A."/>
            <person name="Niehaus K."/>
            <person name="Puehler A."/>
        </authorList>
    </citation>
    <scope>NUCLEOTIDE SEQUENCE [LARGE SCALE GENOMIC DNA]</scope>
    <source>
        <strain>B100</strain>
    </source>
</reference>
<protein>
    <recommendedName>
        <fullName evidence="1">3-deoxy-D-manno-octulosonic acid kinase</fullName>
        <shortName evidence="1">Kdo kinase</shortName>
        <ecNumber evidence="1">2.7.1.166</ecNumber>
    </recommendedName>
</protein>
<feature type="chain" id="PRO_1000127645" description="3-deoxy-D-manno-octulosonic acid kinase">
    <location>
        <begin position="1"/>
        <end position="249"/>
    </location>
</feature>
<feature type="active site" evidence="1">
    <location>
        <position position="175"/>
    </location>
</feature>
<keyword id="KW-0067">ATP-binding</keyword>
<keyword id="KW-0997">Cell inner membrane</keyword>
<keyword id="KW-1003">Cell membrane</keyword>
<keyword id="KW-0418">Kinase</keyword>
<keyword id="KW-0448">Lipopolysaccharide biosynthesis</keyword>
<keyword id="KW-0472">Membrane</keyword>
<keyword id="KW-0547">Nucleotide-binding</keyword>
<keyword id="KW-0808">Transferase</keyword>
<proteinExistence type="inferred from homology"/>
<evidence type="ECO:0000255" key="1">
    <source>
        <dbReference type="HAMAP-Rule" id="MF_00521"/>
    </source>
</evidence>
<comment type="function">
    <text evidence="1">Catalyzes the ATP-dependent phosphorylation of the 3-deoxy-D-manno-octulosonic acid (Kdo) residue in Kdo-lipid IV(A) at the 4-OH position.</text>
</comment>
<comment type="catalytic activity">
    <reaction evidence="1">
        <text>an alpha-Kdo-(2-&gt;6)-lipid IVA + ATP = a 4-O-phospho-alpha-Kdo-(2-&gt;6)-lipid IVA + ADP + H(+)</text>
        <dbReference type="Rhea" id="RHEA:74271"/>
        <dbReference type="ChEBI" id="CHEBI:15378"/>
        <dbReference type="ChEBI" id="CHEBI:30616"/>
        <dbReference type="ChEBI" id="CHEBI:176428"/>
        <dbReference type="ChEBI" id="CHEBI:193140"/>
        <dbReference type="ChEBI" id="CHEBI:456216"/>
        <dbReference type="EC" id="2.7.1.166"/>
    </reaction>
</comment>
<comment type="pathway">
    <text evidence="1">Bacterial outer membrane biogenesis; LPS core biosynthesis.</text>
</comment>
<comment type="subcellular location">
    <subcellularLocation>
        <location evidence="1">Cell inner membrane</location>
        <topology evidence="1">Peripheral membrane protein</topology>
        <orientation evidence="1">Cytoplasmic side</orientation>
    </subcellularLocation>
</comment>
<comment type="similarity">
    <text evidence="1">Belongs to the protein kinase superfamily. KdkA/RfaP family.</text>
</comment>
<name>KDKA_XANCB</name>